<keyword id="KW-1185">Reference proteome</keyword>
<keyword id="KW-0678">Repressor</keyword>
<keyword id="KW-0346">Stress response</keyword>
<keyword id="KW-0804">Transcription</keyword>
<keyword id="KW-0805">Transcription regulation</keyword>
<sequence>MGTADERRFEVLRAIVADFVATHEPIGSKSLVERHNLGVSSATIRNDMAVLEAEGYIAQPHTSSGRVPTEKGYREFVDRLDDVKPLSMVERRAIQGFLESGVDLDDVLRRAVRLLAQLTRQVAVVQYPTLSTSKVRHLEVIALTPARLLMVVITDSGRVDQRIVELGDVIDDHQLSQLRELLGQALEGKKLAAASVAVADLAGQLSGAGGLGDAVGRSATVLLESLVEHTEERLLMGGTANLTRNAADFGGSLRSILEALEEQVVVLRLLAAQQEAGKVTVRIGHETEAEQIVGTSMVSTAYGSNDTVYGGMGVLGPTRMDYPGTIASVAAVALYIGEVLGAR</sequence>
<feature type="chain" id="PRO_1000092820" description="Heat-inducible transcription repressor HrcA">
    <location>
        <begin position="1"/>
        <end position="343"/>
    </location>
</feature>
<comment type="function">
    <text evidence="1">Negative regulator of class I heat shock genes (grpE-dnaK-dnaJ and groELS operons). Prevents heat-shock induction of these operons.</text>
</comment>
<comment type="similarity">
    <text evidence="1">Belongs to the HrcA family.</text>
</comment>
<accession>B2HM80</accession>
<evidence type="ECO:0000255" key="1">
    <source>
        <dbReference type="HAMAP-Rule" id="MF_00081"/>
    </source>
</evidence>
<dbReference type="EMBL" id="CP000854">
    <property type="protein sequence ID" value="ACC42100.1"/>
    <property type="molecule type" value="Genomic_DNA"/>
</dbReference>
<dbReference type="RefSeq" id="WP_012395300.1">
    <property type="nucleotide sequence ID" value="NC_010612.1"/>
</dbReference>
<dbReference type="SMR" id="B2HM80"/>
<dbReference type="STRING" id="216594.MMAR_3684"/>
<dbReference type="GeneID" id="34341932"/>
<dbReference type="KEGG" id="mmi:MMAR_3684"/>
<dbReference type="eggNOG" id="COG1420">
    <property type="taxonomic scope" value="Bacteria"/>
</dbReference>
<dbReference type="HOGENOM" id="CLU_050019_2_0_11"/>
<dbReference type="OrthoDB" id="9783139at2"/>
<dbReference type="Proteomes" id="UP000001190">
    <property type="component" value="Chromosome"/>
</dbReference>
<dbReference type="GO" id="GO:0003677">
    <property type="term" value="F:DNA binding"/>
    <property type="evidence" value="ECO:0007669"/>
    <property type="project" value="InterPro"/>
</dbReference>
<dbReference type="GO" id="GO:0045892">
    <property type="term" value="P:negative regulation of DNA-templated transcription"/>
    <property type="evidence" value="ECO:0007669"/>
    <property type="project" value="UniProtKB-UniRule"/>
</dbReference>
<dbReference type="FunFam" id="1.10.10.10:FF:000049">
    <property type="entry name" value="Heat-inducible transcription repressor HrcA"/>
    <property type="match status" value="1"/>
</dbReference>
<dbReference type="FunFam" id="3.30.390.60:FF:000003">
    <property type="entry name" value="Heat-inducible transcription repressor HrcA"/>
    <property type="match status" value="1"/>
</dbReference>
<dbReference type="Gene3D" id="3.30.450.40">
    <property type="match status" value="1"/>
</dbReference>
<dbReference type="Gene3D" id="3.30.390.60">
    <property type="entry name" value="Heat-inducible transcription repressor hrca homolog, domain 3"/>
    <property type="match status" value="1"/>
</dbReference>
<dbReference type="Gene3D" id="1.10.10.10">
    <property type="entry name" value="Winged helix-like DNA-binding domain superfamily/Winged helix DNA-binding domain"/>
    <property type="match status" value="1"/>
</dbReference>
<dbReference type="HAMAP" id="MF_00081">
    <property type="entry name" value="HrcA"/>
    <property type="match status" value="1"/>
</dbReference>
<dbReference type="InterPro" id="IPR029016">
    <property type="entry name" value="GAF-like_dom_sf"/>
</dbReference>
<dbReference type="InterPro" id="IPR002571">
    <property type="entry name" value="HrcA"/>
</dbReference>
<dbReference type="InterPro" id="IPR021153">
    <property type="entry name" value="HrcA_C"/>
</dbReference>
<dbReference type="InterPro" id="IPR036388">
    <property type="entry name" value="WH-like_DNA-bd_sf"/>
</dbReference>
<dbReference type="InterPro" id="IPR036390">
    <property type="entry name" value="WH_DNA-bd_sf"/>
</dbReference>
<dbReference type="InterPro" id="IPR023120">
    <property type="entry name" value="WHTH_transcript_rep_HrcA_IDD"/>
</dbReference>
<dbReference type="NCBIfam" id="TIGR00331">
    <property type="entry name" value="hrcA"/>
    <property type="match status" value="1"/>
</dbReference>
<dbReference type="PANTHER" id="PTHR34824">
    <property type="entry name" value="HEAT-INDUCIBLE TRANSCRIPTION REPRESSOR HRCA"/>
    <property type="match status" value="1"/>
</dbReference>
<dbReference type="PANTHER" id="PTHR34824:SF1">
    <property type="entry name" value="HEAT-INDUCIBLE TRANSCRIPTION REPRESSOR HRCA"/>
    <property type="match status" value="1"/>
</dbReference>
<dbReference type="Pfam" id="PF01628">
    <property type="entry name" value="HrcA"/>
    <property type="match status" value="1"/>
</dbReference>
<dbReference type="PIRSF" id="PIRSF005485">
    <property type="entry name" value="HrcA"/>
    <property type="match status" value="1"/>
</dbReference>
<dbReference type="SUPFAM" id="SSF55781">
    <property type="entry name" value="GAF domain-like"/>
    <property type="match status" value="1"/>
</dbReference>
<dbReference type="SUPFAM" id="SSF46785">
    <property type="entry name" value="Winged helix' DNA-binding domain"/>
    <property type="match status" value="1"/>
</dbReference>
<gene>
    <name evidence="1" type="primary">hrcA</name>
    <name type="ordered locus">MMAR_3684</name>
</gene>
<name>HRCA_MYCMM</name>
<proteinExistence type="inferred from homology"/>
<reference key="1">
    <citation type="journal article" date="2008" name="Genome Res.">
        <title>Insights from the complete genome sequence of Mycobacterium marinum on the evolution of Mycobacterium tuberculosis.</title>
        <authorList>
            <person name="Stinear T.P."/>
            <person name="Seemann T."/>
            <person name="Harrison P.F."/>
            <person name="Jenkin G.A."/>
            <person name="Davies J.K."/>
            <person name="Johnson P.D."/>
            <person name="Abdellah Z."/>
            <person name="Arrowsmith C."/>
            <person name="Chillingworth T."/>
            <person name="Churcher C."/>
            <person name="Clarke K."/>
            <person name="Cronin A."/>
            <person name="Davis P."/>
            <person name="Goodhead I."/>
            <person name="Holroyd N."/>
            <person name="Jagels K."/>
            <person name="Lord A."/>
            <person name="Moule S."/>
            <person name="Mungall K."/>
            <person name="Norbertczak H."/>
            <person name="Quail M.A."/>
            <person name="Rabbinowitsch E."/>
            <person name="Walker D."/>
            <person name="White B."/>
            <person name="Whitehead S."/>
            <person name="Small P.L."/>
            <person name="Brosch R."/>
            <person name="Ramakrishnan L."/>
            <person name="Fischbach M.A."/>
            <person name="Parkhill J."/>
            <person name="Cole S.T."/>
        </authorList>
    </citation>
    <scope>NUCLEOTIDE SEQUENCE [LARGE SCALE GENOMIC DNA]</scope>
    <source>
        <strain>ATCC BAA-535 / M</strain>
    </source>
</reference>
<organism>
    <name type="scientific">Mycobacterium marinum (strain ATCC BAA-535 / M)</name>
    <dbReference type="NCBI Taxonomy" id="216594"/>
    <lineage>
        <taxon>Bacteria</taxon>
        <taxon>Bacillati</taxon>
        <taxon>Actinomycetota</taxon>
        <taxon>Actinomycetes</taxon>
        <taxon>Mycobacteriales</taxon>
        <taxon>Mycobacteriaceae</taxon>
        <taxon>Mycobacterium</taxon>
        <taxon>Mycobacterium ulcerans group</taxon>
    </lineage>
</organism>
<protein>
    <recommendedName>
        <fullName evidence="1">Heat-inducible transcription repressor HrcA</fullName>
    </recommendedName>
</protein>